<reference key="1">
    <citation type="journal article" date="2005" name="Jpn. Agric. Res. Q.">
        <title>Genome sequence of Xanthomonas oryzae pv. oryzae suggests contribution of large numbers of effector genes and insertion sequences to its race diversity.</title>
        <authorList>
            <person name="Ochiai H."/>
            <person name="Inoue Y."/>
            <person name="Takeya M."/>
            <person name="Sasaki A."/>
            <person name="Kaku H."/>
        </authorList>
    </citation>
    <scope>NUCLEOTIDE SEQUENCE [LARGE SCALE GENOMIC DNA]</scope>
    <source>
        <strain>MAFF 311018</strain>
    </source>
</reference>
<protein>
    <recommendedName>
        <fullName evidence="1">UPF0149 protein XOO1028</fullName>
    </recommendedName>
</protein>
<sequence>MDLPDVTAVQNESRQLALASSAAELHGGLCGWLSGGGADSADWLARILADTGQVAPKQGGALDQLRQATVAQMEDRDFAFELLLVEDGAPLAARTDALFDWCRAFLGGFGLAAQQRPALSEEGEEALQDLARLAQASSDDFDAADEDDTALAEIEEFVRVAVLLLHGDCVMGPRFRQRLN</sequence>
<evidence type="ECO:0000255" key="1">
    <source>
        <dbReference type="HAMAP-Rule" id="MF_00346"/>
    </source>
</evidence>
<dbReference type="EMBL" id="AP008229">
    <property type="protein sequence ID" value="BAE67783.1"/>
    <property type="molecule type" value="Genomic_DNA"/>
</dbReference>
<dbReference type="RefSeq" id="WP_011407785.1">
    <property type="nucleotide sequence ID" value="NC_007705.1"/>
</dbReference>
<dbReference type="SMR" id="Q2P6P4"/>
<dbReference type="KEGG" id="xom:XOO1028"/>
<dbReference type="HOGENOM" id="CLU_085336_0_0_6"/>
<dbReference type="GO" id="GO:0005829">
    <property type="term" value="C:cytosol"/>
    <property type="evidence" value="ECO:0007669"/>
    <property type="project" value="TreeGrafter"/>
</dbReference>
<dbReference type="FunFam" id="1.20.120.740:FF:000002">
    <property type="entry name" value="UPF0149 protein XC_0904"/>
    <property type="match status" value="1"/>
</dbReference>
<dbReference type="Gene3D" id="1.20.120.740">
    <property type="entry name" value="YgfB uncharacterised protein family UPF0149, PF03695"/>
    <property type="match status" value="1"/>
</dbReference>
<dbReference type="HAMAP" id="MF_00346">
    <property type="entry name" value="UPF0149"/>
    <property type="match status" value="1"/>
</dbReference>
<dbReference type="InterPro" id="IPR011978">
    <property type="entry name" value="YgfB-like"/>
</dbReference>
<dbReference type="InterPro" id="IPR036255">
    <property type="entry name" value="YgfB-like_sf"/>
</dbReference>
<dbReference type="NCBIfam" id="NF003405">
    <property type="entry name" value="PRK04758.1"/>
    <property type="match status" value="1"/>
</dbReference>
<dbReference type="PANTHER" id="PTHR37528">
    <property type="entry name" value="UPF0149 PROTEIN YGFB"/>
    <property type="match status" value="1"/>
</dbReference>
<dbReference type="PANTHER" id="PTHR37528:SF1">
    <property type="entry name" value="UPF0149 PROTEIN YGFB"/>
    <property type="match status" value="1"/>
</dbReference>
<dbReference type="Pfam" id="PF03695">
    <property type="entry name" value="UPF0149"/>
    <property type="match status" value="1"/>
</dbReference>
<dbReference type="SUPFAM" id="SSF101327">
    <property type="entry name" value="YgfB-like"/>
    <property type="match status" value="1"/>
</dbReference>
<comment type="similarity">
    <text evidence="1">Belongs to the UPF0149 family.</text>
</comment>
<organism>
    <name type="scientific">Xanthomonas oryzae pv. oryzae (strain MAFF 311018)</name>
    <dbReference type="NCBI Taxonomy" id="342109"/>
    <lineage>
        <taxon>Bacteria</taxon>
        <taxon>Pseudomonadati</taxon>
        <taxon>Pseudomonadota</taxon>
        <taxon>Gammaproteobacteria</taxon>
        <taxon>Lysobacterales</taxon>
        <taxon>Lysobacteraceae</taxon>
        <taxon>Xanthomonas</taxon>
    </lineage>
</organism>
<proteinExistence type="inferred from homology"/>
<gene>
    <name type="ordered locus">XOO1028</name>
</gene>
<feature type="chain" id="PRO_1000013053" description="UPF0149 protein XOO1028">
    <location>
        <begin position="1"/>
        <end position="180"/>
    </location>
</feature>
<name>Y1028_XANOM</name>
<accession>Q2P6P4</accession>